<feature type="chain" id="PRO_1000145032" description="Protein translocase subunit SecA">
    <location>
        <begin position="1"/>
        <end position="963"/>
    </location>
</feature>
<feature type="binding site" evidence="1">
    <location>
        <position position="87"/>
    </location>
    <ligand>
        <name>ATP</name>
        <dbReference type="ChEBI" id="CHEBI:30616"/>
    </ligand>
</feature>
<feature type="binding site" evidence="1">
    <location>
        <begin position="105"/>
        <end position="109"/>
    </location>
    <ligand>
        <name>ATP</name>
        <dbReference type="ChEBI" id="CHEBI:30616"/>
    </ligand>
</feature>
<feature type="binding site" evidence="1">
    <location>
        <position position="524"/>
    </location>
    <ligand>
        <name>ATP</name>
        <dbReference type="ChEBI" id="CHEBI:30616"/>
    </ligand>
</feature>
<feature type="binding site" evidence="1">
    <location>
        <position position="946"/>
    </location>
    <ligand>
        <name>Zn(2+)</name>
        <dbReference type="ChEBI" id="CHEBI:29105"/>
    </ligand>
</feature>
<feature type="binding site" evidence="1">
    <location>
        <position position="948"/>
    </location>
    <ligand>
        <name>Zn(2+)</name>
        <dbReference type="ChEBI" id="CHEBI:29105"/>
    </ligand>
</feature>
<feature type="binding site" evidence="1">
    <location>
        <position position="957"/>
    </location>
    <ligand>
        <name>Zn(2+)</name>
        <dbReference type="ChEBI" id="CHEBI:29105"/>
    </ligand>
</feature>
<feature type="binding site" evidence="1">
    <location>
        <position position="958"/>
    </location>
    <ligand>
        <name>Zn(2+)</name>
        <dbReference type="ChEBI" id="CHEBI:29105"/>
    </ligand>
</feature>
<name>SECA_METRJ</name>
<comment type="function">
    <text evidence="1">Part of the Sec protein translocase complex. Interacts with the SecYEG preprotein conducting channel. Has a central role in coupling the hydrolysis of ATP to the transfer of proteins into and across the cell membrane, serving both as a receptor for the preprotein-SecB complex and as an ATP-driven molecular motor driving the stepwise translocation of polypeptide chains across the membrane.</text>
</comment>
<comment type="catalytic activity">
    <reaction evidence="1">
        <text>ATP + H2O + cellular proteinSide 1 = ADP + phosphate + cellular proteinSide 2.</text>
        <dbReference type="EC" id="7.4.2.8"/>
    </reaction>
</comment>
<comment type="cofactor">
    <cofactor evidence="1">
        <name>Zn(2+)</name>
        <dbReference type="ChEBI" id="CHEBI:29105"/>
    </cofactor>
    <text evidence="1">May bind 1 zinc ion per subunit.</text>
</comment>
<comment type="subunit">
    <text evidence="1">Monomer and homodimer. Part of the essential Sec protein translocation apparatus which comprises SecA, SecYEG and auxiliary proteins SecDF-YajC and YidC.</text>
</comment>
<comment type="subcellular location">
    <subcellularLocation>
        <location evidence="1">Cell inner membrane</location>
        <topology evidence="1">Peripheral membrane protein</topology>
        <orientation evidence="1">Cytoplasmic side</orientation>
    </subcellularLocation>
    <subcellularLocation>
        <location evidence="1">Cytoplasm</location>
    </subcellularLocation>
    <text evidence="1">Distribution is 50-50.</text>
</comment>
<comment type="similarity">
    <text evidence="1">Belongs to the SecA family.</text>
</comment>
<keyword id="KW-0067">ATP-binding</keyword>
<keyword id="KW-0997">Cell inner membrane</keyword>
<keyword id="KW-1003">Cell membrane</keyword>
<keyword id="KW-0963">Cytoplasm</keyword>
<keyword id="KW-0472">Membrane</keyword>
<keyword id="KW-0479">Metal-binding</keyword>
<keyword id="KW-0547">Nucleotide-binding</keyword>
<keyword id="KW-0653">Protein transport</keyword>
<keyword id="KW-1278">Translocase</keyword>
<keyword id="KW-0811">Translocation</keyword>
<keyword id="KW-0813">Transport</keyword>
<keyword id="KW-0862">Zinc</keyword>
<sequence>MLGSIAKKIFGSSNDRRVKGYRPRVAQINALEPEIQALSDEALRARTDMLKAELANGKSLDDILVPAFATVREAAKRVFGQRHFDVQLIGGMVLHEGGIAEMKTGEGKTLVATLPVYLNALEGKGVHVVTVNDYLASRDAEWMGQVYRFLGLSVGTIVHGLDDAQRKEAYACDITYGTNNEYGFDYLRDNMKYELSQLAQRGHNFAIVDEVDSILIDEARTPLIISGPVDDRSELYVAVDALMPRLRKEFYDLDEKQRTVSLTEEGNEFIEEAMREAGLLKEGDLYDAHNVTLVHHVNQALRAHTLFTRDKDYIVKNDEVVIIDEFTGRMMQGRRYSEGLHQALEAKERVTIQPENQTLASITFQNYFRLYKKLAGMTGTASTEADEFAEIYKLDVVDIPTNKEVERVDEDDEVYRTVGEKYEGIIAEIDKAHARHQPILVGTGSIEKSEHLAEMLKKAGYSLLDYSDPNALTDVYAAAREGRVTKRFAVLNARFHEQEAYIVAEAGVPGAITIATNMAGRGTDIKLGGNLEMRIEKELGHLADGPERDAAIAAIKAEIAENRTKVLASGEPADPAAGRKKDLPGGLYIIGTERHESRRIDNQLRGRSGRQGDPGRSKFYLSLQDDLMRIFGSDRMDGMLQKLGLEQGEAIIHPWINKAIEKAQQKVEARNFDMRKNVLKYDNVMNDQRKVVFEQRRDFMGQDSVRETVDEMREGVIDDLVARHIPENAYAEQWDVAGLREQVKEILNLDVPVEDWAKEEGIADEEMRERLLKAAETAYAERTEKNGAEVTAYIEKQVLLQTLDHLWREHLVTLDHLRQVIGWRGFAQRDPLNEYKSEAFDLFNGLVTALREQVTAQLSRVEIMLQEPPAEFPAGGPALPPMFAQHLDPVTGENEMDYAGFGSGSDGGGGPAYGFAAQGLAADGAVLERDPTDANTWGRVGRNEPCPCGSGKKYKHCHGSLQA</sequence>
<dbReference type="EC" id="7.4.2.8" evidence="1"/>
<dbReference type="EMBL" id="CP001001">
    <property type="protein sequence ID" value="ACB22748.1"/>
    <property type="molecule type" value="Genomic_DNA"/>
</dbReference>
<dbReference type="RefSeq" id="WP_012317741.1">
    <property type="nucleotide sequence ID" value="NC_010505.1"/>
</dbReference>
<dbReference type="SMR" id="B1LXI2"/>
<dbReference type="STRING" id="426355.Mrad2831_0737"/>
<dbReference type="GeneID" id="6136752"/>
<dbReference type="KEGG" id="mrd:Mrad2831_0737"/>
<dbReference type="eggNOG" id="COG0653">
    <property type="taxonomic scope" value="Bacteria"/>
</dbReference>
<dbReference type="HOGENOM" id="CLU_005314_3_0_5"/>
<dbReference type="OrthoDB" id="9805579at2"/>
<dbReference type="Proteomes" id="UP000006589">
    <property type="component" value="Chromosome"/>
</dbReference>
<dbReference type="GO" id="GO:0031522">
    <property type="term" value="C:cell envelope Sec protein transport complex"/>
    <property type="evidence" value="ECO:0007669"/>
    <property type="project" value="TreeGrafter"/>
</dbReference>
<dbReference type="GO" id="GO:0005829">
    <property type="term" value="C:cytosol"/>
    <property type="evidence" value="ECO:0007669"/>
    <property type="project" value="TreeGrafter"/>
</dbReference>
<dbReference type="GO" id="GO:0005886">
    <property type="term" value="C:plasma membrane"/>
    <property type="evidence" value="ECO:0007669"/>
    <property type="project" value="UniProtKB-SubCell"/>
</dbReference>
<dbReference type="GO" id="GO:0005524">
    <property type="term" value="F:ATP binding"/>
    <property type="evidence" value="ECO:0007669"/>
    <property type="project" value="UniProtKB-UniRule"/>
</dbReference>
<dbReference type="GO" id="GO:0046872">
    <property type="term" value="F:metal ion binding"/>
    <property type="evidence" value="ECO:0007669"/>
    <property type="project" value="UniProtKB-KW"/>
</dbReference>
<dbReference type="GO" id="GO:0008564">
    <property type="term" value="F:protein-exporting ATPase activity"/>
    <property type="evidence" value="ECO:0007669"/>
    <property type="project" value="UniProtKB-EC"/>
</dbReference>
<dbReference type="GO" id="GO:0065002">
    <property type="term" value="P:intracellular protein transmembrane transport"/>
    <property type="evidence" value="ECO:0007669"/>
    <property type="project" value="UniProtKB-UniRule"/>
</dbReference>
<dbReference type="GO" id="GO:0017038">
    <property type="term" value="P:protein import"/>
    <property type="evidence" value="ECO:0007669"/>
    <property type="project" value="InterPro"/>
</dbReference>
<dbReference type="GO" id="GO:0006605">
    <property type="term" value="P:protein targeting"/>
    <property type="evidence" value="ECO:0007669"/>
    <property type="project" value="UniProtKB-UniRule"/>
</dbReference>
<dbReference type="GO" id="GO:0043952">
    <property type="term" value="P:protein transport by the Sec complex"/>
    <property type="evidence" value="ECO:0007669"/>
    <property type="project" value="TreeGrafter"/>
</dbReference>
<dbReference type="CDD" id="cd17928">
    <property type="entry name" value="DEXDc_SecA"/>
    <property type="match status" value="1"/>
</dbReference>
<dbReference type="CDD" id="cd18803">
    <property type="entry name" value="SF2_C_secA"/>
    <property type="match status" value="1"/>
</dbReference>
<dbReference type="FunFam" id="3.90.1440.10:FF:000001">
    <property type="entry name" value="Preprotein translocase subunit SecA"/>
    <property type="match status" value="1"/>
</dbReference>
<dbReference type="FunFam" id="1.10.3060.10:FF:000003">
    <property type="entry name" value="Protein translocase subunit SecA"/>
    <property type="match status" value="1"/>
</dbReference>
<dbReference type="FunFam" id="3.40.50.300:FF:000334">
    <property type="entry name" value="Protein translocase subunit SecA"/>
    <property type="match status" value="1"/>
</dbReference>
<dbReference type="FunFam" id="3.40.50.300:FF:001790">
    <property type="entry name" value="Protein translocase subunit SecA"/>
    <property type="match status" value="1"/>
</dbReference>
<dbReference type="Gene3D" id="3.10.450.50">
    <property type="match status" value="1"/>
</dbReference>
<dbReference type="Gene3D" id="1.10.3060.10">
    <property type="entry name" value="Helical scaffold and wing domains of SecA"/>
    <property type="match status" value="1"/>
</dbReference>
<dbReference type="Gene3D" id="3.40.50.300">
    <property type="entry name" value="P-loop containing nucleotide triphosphate hydrolases"/>
    <property type="match status" value="2"/>
</dbReference>
<dbReference type="Gene3D" id="3.90.1440.10">
    <property type="entry name" value="SecA, preprotein cross-linking domain"/>
    <property type="match status" value="1"/>
</dbReference>
<dbReference type="HAMAP" id="MF_01382">
    <property type="entry name" value="SecA"/>
    <property type="match status" value="1"/>
</dbReference>
<dbReference type="InterPro" id="IPR014001">
    <property type="entry name" value="Helicase_ATP-bd"/>
</dbReference>
<dbReference type="InterPro" id="IPR027417">
    <property type="entry name" value="P-loop_NTPase"/>
</dbReference>
<dbReference type="InterPro" id="IPR004027">
    <property type="entry name" value="SEC_C_motif"/>
</dbReference>
<dbReference type="InterPro" id="IPR000185">
    <property type="entry name" value="SecA"/>
</dbReference>
<dbReference type="InterPro" id="IPR020937">
    <property type="entry name" value="SecA_CS"/>
</dbReference>
<dbReference type="InterPro" id="IPR011115">
    <property type="entry name" value="SecA_DEAD"/>
</dbReference>
<dbReference type="InterPro" id="IPR014018">
    <property type="entry name" value="SecA_motor_DEAD"/>
</dbReference>
<dbReference type="InterPro" id="IPR011130">
    <property type="entry name" value="SecA_preprotein_X-link_dom"/>
</dbReference>
<dbReference type="InterPro" id="IPR044722">
    <property type="entry name" value="SecA_SF2_C"/>
</dbReference>
<dbReference type="InterPro" id="IPR011116">
    <property type="entry name" value="SecA_Wing/Scaffold"/>
</dbReference>
<dbReference type="InterPro" id="IPR036266">
    <property type="entry name" value="SecA_Wing/Scaffold_sf"/>
</dbReference>
<dbReference type="InterPro" id="IPR036670">
    <property type="entry name" value="SecA_X-link_sf"/>
</dbReference>
<dbReference type="NCBIfam" id="NF009538">
    <property type="entry name" value="PRK12904.1"/>
    <property type="match status" value="1"/>
</dbReference>
<dbReference type="NCBIfam" id="TIGR00963">
    <property type="entry name" value="secA"/>
    <property type="match status" value="1"/>
</dbReference>
<dbReference type="PANTHER" id="PTHR30612:SF0">
    <property type="entry name" value="CHLOROPLAST PROTEIN-TRANSPORTING ATPASE"/>
    <property type="match status" value="1"/>
</dbReference>
<dbReference type="PANTHER" id="PTHR30612">
    <property type="entry name" value="SECA INNER MEMBRANE COMPONENT OF SEC PROTEIN SECRETION SYSTEM"/>
    <property type="match status" value="1"/>
</dbReference>
<dbReference type="Pfam" id="PF21090">
    <property type="entry name" value="P-loop_SecA"/>
    <property type="match status" value="1"/>
</dbReference>
<dbReference type="Pfam" id="PF02810">
    <property type="entry name" value="SEC-C"/>
    <property type="match status" value="1"/>
</dbReference>
<dbReference type="Pfam" id="PF07517">
    <property type="entry name" value="SecA_DEAD"/>
    <property type="match status" value="1"/>
</dbReference>
<dbReference type="Pfam" id="PF01043">
    <property type="entry name" value="SecA_PP_bind"/>
    <property type="match status" value="1"/>
</dbReference>
<dbReference type="Pfam" id="PF07516">
    <property type="entry name" value="SecA_SW"/>
    <property type="match status" value="1"/>
</dbReference>
<dbReference type="PRINTS" id="PR00906">
    <property type="entry name" value="SECA"/>
</dbReference>
<dbReference type="SMART" id="SM00957">
    <property type="entry name" value="SecA_DEAD"/>
    <property type="match status" value="1"/>
</dbReference>
<dbReference type="SMART" id="SM00958">
    <property type="entry name" value="SecA_PP_bind"/>
    <property type="match status" value="1"/>
</dbReference>
<dbReference type="SUPFAM" id="SSF81886">
    <property type="entry name" value="Helical scaffold and wing domains of SecA"/>
    <property type="match status" value="1"/>
</dbReference>
<dbReference type="SUPFAM" id="SSF52540">
    <property type="entry name" value="P-loop containing nucleoside triphosphate hydrolases"/>
    <property type="match status" value="2"/>
</dbReference>
<dbReference type="SUPFAM" id="SSF81767">
    <property type="entry name" value="Pre-protein crosslinking domain of SecA"/>
    <property type="match status" value="1"/>
</dbReference>
<dbReference type="PROSITE" id="PS01312">
    <property type="entry name" value="SECA"/>
    <property type="match status" value="1"/>
</dbReference>
<dbReference type="PROSITE" id="PS51196">
    <property type="entry name" value="SECA_MOTOR_DEAD"/>
    <property type="match status" value="1"/>
</dbReference>
<reference key="1">
    <citation type="submission" date="2008-03" db="EMBL/GenBank/DDBJ databases">
        <title>Complete sequence of chromosome of Methylobacterium radiotolerans JCM 2831.</title>
        <authorList>
            <consortium name="US DOE Joint Genome Institute"/>
            <person name="Copeland A."/>
            <person name="Lucas S."/>
            <person name="Lapidus A."/>
            <person name="Glavina del Rio T."/>
            <person name="Dalin E."/>
            <person name="Tice H."/>
            <person name="Bruce D."/>
            <person name="Goodwin L."/>
            <person name="Pitluck S."/>
            <person name="Kiss H."/>
            <person name="Brettin T."/>
            <person name="Detter J.C."/>
            <person name="Han C."/>
            <person name="Kuske C.R."/>
            <person name="Schmutz J."/>
            <person name="Larimer F."/>
            <person name="Land M."/>
            <person name="Hauser L."/>
            <person name="Kyrpides N."/>
            <person name="Mikhailova N."/>
            <person name="Marx C.J."/>
            <person name="Richardson P."/>
        </authorList>
    </citation>
    <scope>NUCLEOTIDE SEQUENCE [LARGE SCALE GENOMIC DNA]</scope>
    <source>
        <strain>ATCC 27329 / DSM 1819 / JCM 2831 / NBRC 15690 / NCIMB 10815 / 0-1</strain>
    </source>
</reference>
<protein>
    <recommendedName>
        <fullName evidence="1">Protein translocase subunit SecA</fullName>
        <ecNumber evidence="1">7.4.2.8</ecNumber>
    </recommendedName>
</protein>
<proteinExistence type="inferred from homology"/>
<organism>
    <name type="scientific">Methylobacterium radiotolerans (strain ATCC 27329 / DSM 1819 / JCM 2831 / NBRC 15690 / NCIMB 10815 / 0-1)</name>
    <dbReference type="NCBI Taxonomy" id="426355"/>
    <lineage>
        <taxon>Bacteria</taxon>
        <taxon>Pseudomonadati</taxon>
        <taxon>Pseudomonadota</taxon>
        <taxon>Alphaproteobacteria</taxon>
        <taxon>Hyphomicrobiales</taxon>
        <taxon>Methylobacteriaceae</taxon>
        <taxon>Methylobacterium</taxon>
    </lineage>
</organism>
<evidence type="ECO:0000255" key="1">
    <source>
        <dbReference type="HAMAP-Rule" id="MF_01382"/>
    </source>
</evidence>
<accession>B1LXI2</accession>
<gene>
    <name evidence="1" type="primary">secA</name>
    <name type="ordered locus">Mrad2831_0737</name>
</gene>